<protein>
    <recommendedName>
        <fullName>TATA-box-binding protein</fullName>
    </recommendedName>
    <alternativeName>
        <fullName>TATA sequence-binding protein</fullName>
    </alternativeName>
    <alternativeName>
        <fullName>TATA-binding factor</fullName>
    </alternativeName>
    <alternativeName>
        <fullName>TATA-box factor</fullName>
    </alternativeName>
    <alternativeName>
        <fullName>Transcription initiation factor TFIID TBP subunit</fullName>
    </alternativeName>
</protein>
<accession>P29037</accession>
<accession>O09169</accession>
<accession>Q80UL8</accession>
<accession>Q8C3S1</accession>
<reference key="1">
    <citation type="journal article" date="1991" name="Nucleic Acids Res.">
        <title>Striking homology of the 'variable' N-terminal as well as the 'conserved core' domains of the mouse and human TATA-factors (TFIID).</title>
        <authorList>
            <person name="Tamura T.-A."/>
            <person name="Sumita K."/>
            <person name="Fujino I."/>
            <person name="Aoyama A."/>
            <person name="Horikoshi M."/>
            <person name="Hoffmann A."/>
            <person name="Roeder R.G."/>
            <person name="Muramatsu M."/>
            <person name="Mikoshiba K."/>
        </authorList>
    </citation>
    <scope>NUCLEOTIDE SEQUENCE [MRNA]</scope>
</reference>
<reference key="2">
    <citation type="journal article" date="1993" name="Nucleic Acids Res.">
        <title>Structure of a mammalian TBP (TATA-binding protein) gene: isolation of the mouse TBP genome.</title>
        <authorList>
            <person name="Sumita K."/>
            <person name="Makino Y."/>
            <person name="Katoh K."/>
            <person name="Kashimoto T."/>
            <person name="Muramatsu M."/>
            <person name="Mikoshiba K."/>
            <person name="Tamura T.-A."/>
        </authorList>
    </citation>
    <scope>NUCLEOTIDE SEQUENCE [MRNA]</scope>
</reference>
<reference key="3">
    <citation type="journal article" date="1997" name="Genomics">
        <title>Linkage of TATA-binding protein and proteasome subunit C5 genes in mice and humans reveals synteny conserved between mammals and invertebrates.</title>
        <authorList>
            <person name="Trachtulec Z."/>
            <person name="Hamvas R.M."/>
            <person name="Forejt J."/>
            <person name="Lehrach H.R."/>
            <person name="Vincek V."/>
            <person name="Klein J."/>
        </authorList>
    </citation>
    <scope>NUCLEOTIDE SEQUENCE [MRNA]</scope>
    <source>
        <strain>TW18/TW5</strain>
        <tissue>Testis</tissue>
    </source>
</reference>
<reference key="4">
    <citation type="journal article" date="2005" name="Science">
        <title>The transcriptional landscape of the mammalian genome.</title>
        <authorList>
            <person name="Carninci P."/>
            <person name="Kasukawa T."/>
            <person name="Katayama S."/>
            <person name="Gough J."/>
            <person name="Frith M.C."/>
            <person name="Maeda N."/>
            <person name="Oyama R."/>
            <person name="Ravasi T."/>
            <person name="Lenhard B."/>
            <person name="Wells C."/>
            <person name="Kodzius R."/>
            <person name="Shimokawa K."/>
            <person name="Bajic V.B."/>
            <person name="Brenner S.E."/>
            <person name="Batalov S."/>
            <person name="Forrest A.R."/>
            <person name="Zavolan M."/>
            <person name="Davis M.J."/>
            <person name="Wilming L.G."/>
            <person name="Aidinis V."/>
            <person name="Allen J.E."/>
            <person name="Ambesi-Impiombato A."/>
            <person name="Apweiler R."/>
            <person name="Aturaliya R.N."/>
            <person name="Bailey T.L."/>
            <person name="Bansal M."/>
            <person name="Baxter L."/>
            <person name="Beisel K.W."/>
            <person name="Bersano T."/>
            <person name="Bono H."/>
            <person name="Chalk A.M."/>
            <person name="Chiu K.P."/>
            <person name="Choudhary V."/>
            <person name="Christoffels A."/>
            <person name="Clutterbuck D.R."/>
            <person name="Crowe M.L."/>
            <person name="Dalla E."/>
            <person name="Dalrymple B.P."/>
            <person name="de Bono B."/>
            <person name="Della Gatta G."/>
            <person name="di Bernardo D."/>
            <person name="Down T."/>
            <person name="Engstrom P."/>
            <person name="Fagiolini M."/>
            <person name="Faulkner G."/>
            <person name="Fletcher C.F."/>
            <person name="Fukushima T."/>
            <person name="Furuno M."/>
            <person name="Futaki S."/>
            <person name="Gariboldi M."/>
            <person name="Georgii-Hemming P."/>
            <person name="Gingeras T.R."/>
            <person name="Gojobori T."/>
            <person name="Green R.E."/>
            <person name="Gustincich S."/>
            <person name="Harbers M."/>
            <person name="Hayashi Y."/>
            <person name="Hensch T.K."/>
            <person name="Hirokawa N."/>
            <person name="Hill D."/>
            <person name="Huminiecki L."/>
            <person name="Iacono M."/>
            <person name="Ikeo K."/>
            <person name="Iwama A."/>
            <person name="Ishikawa T."/>
            <person name="Jakt M."/>
            <person name="Kanapin A."/>
            <person name="Katoh M."/>
            <person name="Kawasawa Y."/>
            <person name="Kelso J."/>
            <person name="Kitamura H."/>
            <person name="Kitano H."/>
            <person name="Kollias G."/>
            <person name="Krishnan S.P."/>
            <person name="Kruger A."/>
            <person name="Kummerfeld S.K."/>
            <person name="Kurochkin I.V."/>
            <person name="Lareau L.F."/>
            <person name="Lazarevic D."/>
            <person name="Lipovich L."/>
            <person name="Liu J."/>
            <person name="Liuni S."/>
            <person name="McWilliam S."/>
            <person name="Madan Babu M."/>
            <person name="Madera M."/>
            <person name="Marchionni L."/>
            <person name="Matsuda H."/>
            <person name="Matsuzawa S."/>
            <person name="Miki H."/>
            <person name="Mignone F."/>
            <person name="Miyake S."/>
            <person name="Morris K."/>
            <person name="Mottagui-Tabar S."/>
            <person name="Mulder N."/>
            <person name="Nakano N."/>
            <person name="Nakauchi H."/>
            <person name="Ng P."/>
            <person name="Nilsson R."/>
            <person name="Nishiguchi S."/>
            <person name="Nishikawa S."/>
            <person name="Nori F."/>
            <person name="Ohara O."/>
            <person name="Okazaki Y."/>
            <person name="Orlando V."/>
            <person name="Pang K.C."/>
            <person name="Pavan W.J."/>
            <person name="Pavesi G."/>
            <person name="Pesole G."/>
            <person name="Petrovsky N."/>
            <person name="Piazza S."/>
            <person name="Reed J."/>
            <person name="Reid J.F."/>
            <person name="Ring B.Z."/>
            <person name="Ringwald M."/>
            <person name="Rost B."/>
            <person name="Ruan Y."/>
            <person name="Salzberg S.L."/>
            <person name="Sandelin A."/>
            <person name="Schneider C."/>
            <person name="Schoenbach C."/>
            <person name="Sekiguchi K."/>
            <person name="Semple C.A."/>
            <person name="Seno S."/>
            <person name="Sessa L."/>
            <person name="Sheng Y."/>
            <person name="Shibata Y."/>
            <person name="Shimada H."/>
            <person name="Shimada K."/>
            <person name="Silva D."/>
            <person name="Sinclair B."/>
            <person name="Sperling S."/>
            <person name="Stupka E."/>
            <person name="Sugiura K."/>
            <person name="Sultana R."/>
            <person name="Takenaka Y."/>
            <person name="Taki K."/>
            <person name="Tammoja K."/>
            <person name="Tan S.L."/>
            <person name="Tang S."/>
            <person name="Taylor M.S."/>
            <person name="Tegner J."/>
            <person name="Teichmann S.A."/>
            <person name="Ueda H.R."/>
            <person name="van Nimwegen E."/>
            <person name="Verardo R."/>
            <person name="Wei C.L."/>
            <person name="Yagi K."/>
            <person name="Yamanishi H."/>
            <person name="Zabarovsky E."/>
            <person name="Zhu S."/>
            <person name="Zimmer A."/>
            <person name="Hide W."/>
            <person name="Bult C."/>
            <person name="Grimmond S.M."/>
            <person name="Teasdale R.D."/>
            <person name="Liu E.T."/>
            <person name="Brusic V."/>
            <person name="Quackenbush J."/>
            <person name="Wahlestedt C."/>
            <person name="Mattick J.S."/>
            <person name="Hume D.A."/>
            <person name="Kai C."/>
            <person name="Sasaki D."/>
            <person name="Tomaru Y."/>
            <person name="Fukuda S."/>
            <person name="Kanamori-Katayama M."/>
            <person name="Suzuki M."/>
            <person name="Aoki J."/>
            <person name="Arakawa T."/>
            <person name="Iida J."/>
            <person name="Imamura K."/>
            <person name="Itoh M."/>
            <person name="Kato T."/>
            <person name="Kawaji H."/>
            <person name="Kawagashira N."/>
            <person name="Kawashima T."/>
            <person name="Kojima M."/>
            <person name="Kondo S."/>
            <person name="Konno H."/>
            <person name="Nakano K."/>
            <person name="Ninomiya N."/>
            <person name="Nishio T."/>
            <person name="Okada M."/>
            <person name="Plessy C."/>
            <person name="Shibata K."/>
            <person name="Shiraki T."/>
            <person name="Suzuki S."/>
            <person name="Tagami M."/>
            <person name="Waki K."/>
            <person name="Watahiki A."/>
            <person name="Okamura-Oho Y."/>
            <person name="Suzuki H."/>
            <person name="Kawai J."/>
            <person name="Hayashizaki Y."/>
        </authorList>
    </citation>
    <scope>NUCLEOTIDE SEQUENCE [LARGE SCALE MRNA]</scope>
    <source>
        <strain>C57BL/6J</strain>
        <tissue>Lung</tissue>
    </source>
</reference>
<reference key="5">
    <citation type="journal article" date="2006" name="Gene Expr. Patterns">
        <title>Developmental and cell type-specific regulation of core promoter transcription factors in germ cells of frogs and mice.</title>
        <authorList>
            <person name="Xiao L."/>
            <person name="Kim M."/>
            <person name="DeJong J."/>
        </authorList>
    </citation>
    <scope>TISSUE SPECIFICITY</scope>
</reference>
<reference key="6">
    <citation type="journal article" date="2004" name="Genome Res.">
        <title>The status, quality, and expansion of the NIH full-length cDNA project: the Mammalian Gene Collection (MGC).</title>
        <authorList>
            <consortium name="The MGC Project Team"/>
        </authorList>
    </citation>
    <scope>NUCLEOTIDE SEQUENCE [LARGE SCALE MRNA]</scope>
    <source>
        <strain>B5/EGFP transgenic ICR mice</strain>
        <strain>FVB/N</strain>
        <tissue>Mammary tumor</tissue>
        <tissue>Trophoblast</tissue>
    </source>
</reference>
<reference key="7">
    <citation type="journal article" date="1996" name="Biochem. Biophys. Res. Commun.">
        <title>Promoter structure of the mouse TATA-binding protein (TBP) gene.</title>
        <authorList>
            <person name="Ohbayashi T."/>
            <person name="Schmidt E.E."/>
            <person name="Makino Y."/>
            <person name="Kishimoto T."/>
            <person name="Nabeshima Y."/>
            <person name="Muramatsu M."/>
            <person name="Tamura T.-A."/>
        </authorList>
    </citation>
    <scope>NUCLEOTIDE SEQUENCE [MRNA] OF 1-36</scope>
</reference>
<reference key="8">
    <citation type="journal article" date="1997" name="Proc. Natl. Acad. Sci. U.S.A.">
        <title>Cloning of murine RNA polymerase I-specific TAF factors: conserved interactions between the subunits of the species-specific transcription initiation factor TIF-IB/SL1.</title>
        <authorList>
            <person name="Heix J."/>
            <person name="Zomerdijk J.C.B.M."/>
            <person name="Ravanpay A."/>
            <person name="Tjian R."/>
            <person name="Grummt I."/>
        </authorList>
    </citation>
    <scope>INTERACTION WITH TAF1A; TAF1B AND TAF1C</scope>
</reference>
<reference key="9">
    <citation type="journal article" date="1998" name="EMBO J.">
        <title>UTF1, a novel transcriptional coactivator expressed in pluripotent embryonic stem cells and extra-embryonic cells.</title>
        <authorList>
            <person name="Okuda A."/>
            <person name="Fukushima A."/>
            <person name="Nishimoto M."/>
            <person name="Orimo A."/>
            <person name="Yamagishi T."/>
            <person name="Nabeshima Y."/>
            <person name="Kuro-o M."/>
            <person name="Nabeshima Y."/>
            <person name="Boon K."/>
            <person name="Keaveney M."/>
            <person name="Stunnenberg H.G."/>
            <person name="Muramatsu M."/>
        </authorList>
    </citation>
    <scope>INTERACTION WITH UTF1</scope>
</reference>
<reference key="10">
    <citation type="journal article" date="1999" name="Biochem. J.">
        <title>Transcriptional autorepression of Msx1 gene is mediated by interactions of Msx1 protein with a multi-protein transcriptional complex containing TATA-binding protein, Sp1 and cAMP-response-element-binding protein-binding protein (CBP/p300).</title>
        <authorList>
            <person name="Shetty S."/>
            <person name="Takahashi T."/>
            <person name="Matsui H."/>
            <person name="Ayengar R."/>
            <person name="Raghow R."/>
        </authorList>
    </citation>
    <scope>INTERACTION WITH MSX1 AND MSX3</scope>
</reference>
<reference key="11">
    <citation type="journal article" date="1999" name="J. Biol. Chem.">
        <title>MRG1 binds to the LIM domain of Lhx2 and may function as a coactivator to stimulate glycoprotein hormone alpha-subunit gene expression.</title>
        <authorList>
            <person name="Glenn D.J."/>
            <person name="Maurer R.A."/>
        </authorList>
    </citation>
    <scope>INTERACTION WITH CITED2</scope>
</reference>
<reference key="12">
    <citation type="journal article" date="2003" name="Mol. Cell. Biol.">
        <title>The murine G+C-rich promoter binding protein mGPBP is required for promoter-specific transcription.</title>
        <authorList>
            <person name="Hsu L.-C."/>
            <person name="Liu S."/>
            <person name="Abedinpour F."/>
            <person name="Beech R.D."/>
            <person name="Lahti J.M."/>
            <person name="Kidd V.J."/>
            <person name="Greenspan J.A."/>
            <person name="Yeung C.-Y."/>
        </authorList>
    </citation>
    <scope>INTERACTION WITH GPBP1</scope>
</reference>
<reference key="13">
    <citation type="journal article" date="2010" name="Cell">
        <title>A tissue-specific atlas of mouse protein phosphorylation and expression.</title>
        <authorList>
            <person name="Huttlin E.L."/>
            <person name="Jedrychowski M.P."/>
            <person name="Elias J.E."/>
            <person name="Goswami T."/>
            <person name="Rad R."/>
            <person name="Beausoleil S.A."/>
            <person name="Villen J."/>
            <person name="Haas W."/>
            <person name="Sowa M.E."/>
            <person name="Gygi S.P."/>
        </authorList>
    </citation>
    <scope>IDENTIFICATION BY MASS SPECTROMETRY [LARGE SCALE ANALYSIS]</scope>
    <source>
        <tissue>Spleen</tissue>
    </source>
</reference>
<reference key="14">
    <citation type="journal article" date="2016" name="Sci. Rep.">
        <title>A transducible nuclear/nucleolar protein, mLLP, regulates neuronal morphogenesis and synaptic transmission.</title>
        <authorList>
            <person name="Yu N.K."/>
            <person name="Kim H.F."/>
            <person name="Shim J."/>
            <person name="Kim S."/>
            <person name="Kim D.W."/>
            <person name="Kwak C."/>
            <person name="Sim S.E."/>
            <person name="Choi J.H."/>
            <person name="Ahn S."/>
            <person name="Yoo J."/>
            <person name="Choi S.L."/>
            <person name="Jang D.J."/>
            <person name="Lim C.S."/>
            <person name="Lee Y.S."/>
            <person name="Kang C."/>
            <person name="Choi S.Y."/>
            <person name="Kaang B.K."/>
        </authorList>
    </citation>
    <scope>INTERACTION WITH LLPH</scope>
</reference>
<sequence length="316" mass="34709">MDQNNSLPPYAQGLASPQGAMTPGIPIFSPMMPYGTGLTPQPIQNTNSLSILEEQQRQQQQQQQQQQQQQAVATAAASVQQSTSQQPTQGASGQTPQLFHSQTLTTAPLPGTTPLYPSPMTPMTPITPATPASESSGIVPQLQNIVSTVNLGCKLDLKTIALRARNAEYNPKRFAAVIMRIREPRTTALIFSSGKMVCTGAKSEEQSRLAARKYARVVQKLGFPAKFLDFKIQNMVGSCDVKFPIRLEGLVLTHQQFSSYEPELFPGLIYRMIKPRIVLLIFVSGKVVLTGAKVRAEIYEAFENIYPILKGFRKTT</sequence>
<comment type="function">
    <text evidence="1">General transcription factor that functions at the core of the DNA-binding multiprotein factor TFIID. Binding of TFIID to the TATA box is the initial transcriptional step of the pre-initiation complex (PIC), playing a role in the activation of eukaryotic genes transcribed by RNA polymerase II. Component of a BRF2-containing transcription factor complex that regulates transcription mediated by RNA polymerase III. Component of the transcription factor SL1/TIF-IB complex, which is involved in the assembly of the PIC (pre-initiation complex) during RNA polymerase I-dependent transcription. The rate of PIC formation probably is primarily dependent on the rate of association of SL1 with the rDNA promoter. SL1 is involved in stabilization of nucleolar transcription factor 1/UBTF on rDNA.</text>
</comment>
<comment type="subunit">
    <text evidence="1 3 4 5 7 8 9 10">Binds DNA as monomer. Belongs to the TFIID complex together with the TBP-associated factors (TAFs). Part of a TFIID-containing RNA polymerase II pre-initiation complex that is composed of TBP and at least GTF2A1, GTF2A2, GTF2E1, GTF2E2, GTF2F1, GTF2H2, GTF2H3, GTF2H4, GTF2H5, GTF2B, TCEA1, ERCC2, ERCC3, TAF1, TAF2, TAF3, TAF4, TAF5, TAF6, TAF7, TAF8, TAF9, TAF10, TAF11, TAF12 and TAF13 (By similarity). Component of the transcription factor SL1/TIF-IB complex, composed of TBP and at least TAF1A, TAF1B, TAF1C and TAF1D. Association of TBP to form either TFIID or SL1/TIF-IB appears to be mutually exclusive. Interacts with TAF1A, TAF1B and TAF1C (PubMed:9050847). Interacts with TFIIB, NCOA6, DRAP1, DR1 and ELF3. Interacts with SPIB, SNAPC1, SNAPC2 and SNAPC4 (By similarity). Interacts with UTF1 (PubMed:9524124). Interacts with BRF2; this interaction promotes recruitment of BRF2 to TATA box-containing promoters. Interacts with UBTF (By similarity). Interacts with GPBP1 (PubMed:14612417). Interacts with CITED2 (PubMed:10593900). Interacts with ATF7IP (Probable). Interacts with LLPH (PubMed:26961175). Interacts with HSF1 (via transactivation domain) (By similarity). Interacts with GTF2B (via C-terminus); this interaction with promoter-bound TBP guides RNA polymerase II into the pre-initiation complex (PIC) (By similarity). Interacts with PAX5 (By similarity). Interacts with MSX1; the interaction may inhibit MSX1 autoinactivation (PubMed:10215616). Interacts with MSX3 (PubMed:10215616).</text>
</comment>
<comment type="subcellular location">
    <subcellularLocation>
        <location evidence="1">Nucleus</location>
    </subcellularLocation>
</comment>
<comment type="tissue specificity">
    <text evidence="6">Ubiquitously expressed.</text>
</comment>
<comment type="similarity">
    <text evidence="10">Belongs to the TBP family.</text>
</comment>
<dbReference type="EMBL" id="D01034">
    <property type="protein sequence ID" value="BAA00840.1"/>
    <property type="molecule type" value="mRNA"/>
</dbReference>
<dbReference type="EMBL" id="U63933">
    <property type="protein sequence ID" value="AAB53097.1"/>
    <property type="molecule type" value="mRNA"/>
</dbReference>
<dbReference type="EMBL" id="AK085037">
    <property type="protein sequence ID" value="BAC39346.1"/>
    <property type="molecule type" value="mRNA"/>
</dbReference>
<dbReference type="EMBL" id="BC050136">
    <property type="protein sequence ID" value="AAH50136.1"/>
    <property type="molecule type" value="mRNA"/>
</dbReference>
<dbReference type="EMBL" id="BC012685">
    <property type="protein sequence ID" value="AAH12685.1"/>
    <property type="molecule type" value="mRNA"/>
</dbReference>
<dbReference type="CCDS" id="CCDS37454.2"/>
<dbReference type="PIR" id="S34437">
    <property type="entry name" value="S34437"/>
</dbReference>
<dbReference type="RefSeq" id="NP_038712.3">
    <property type="nucleotide sequence ID" value="NM_013684.3"/>
</dbReference>
<dbReference type="SMR" id="P29037"/>
<dbReference type="BioGRID" id="203978">
    <property type="interactions" value="34"/>
</dbReference>
<dbReference type="ComplexPortal" id="CPX-932">
    <property type="entry name" value="General transcription factor complex TFIID"/>
</dbReference>
<dbReference type="ComplexPortal" id="CPX-959">
    <property type="entry name" value="General transcription factor complex TFIID, Taf4b variant"/>
</dbReference>
<dbReference type="CORUM" id="P29037"/>
<dbReference type="DIP" id="DIP-24197N"/>
<dbReference type="FunCoup" id="P29037">
    <property type="interactions" value="4477"/>
</dbReference>
<dbReference type="IntAct" id="P29037">
    <property type="interactions" value="8"/>
</dbReference>
<dbReference type="MINT" id="P29037"/>
<dbReference type="STRING" id="10090.ENSMUSP00000124317"/>
<dbReference type="GlyGen" id="P29037">
    <property type="glycosylation" value="2 sites"/>
</dbReference>
<dbReference type="iPTMnet" id="P29037"/>
<dbReference type="PhosphoSitePlus" id="P29037"/>
<dbReference type="SwissPalm" id="P29037"/>
<dbReference type="PaxDb" id="10090-ENSMUSP00000124317"/>
<dbReference type="PeptideAtlas" id="P29037"/>
<dbReference type="ProteomicsDB" id="259361"/>
<dbReference type="Pumba" id="P29037"/>
<dbReference type="Antibodypedia" id="4001">
    <property type="antibodies" value="610 antibodies from 44 providers"/>
</dbReference>
<dbReference type="DNASU" id="21374"/>
<dbReference type="Ensembl" id="ENSMUST00000014911.12">
    <property type="protein sequence ID" value="ENSMUSP00000014911.6"/>
    <property type="gene ID" value="ENSMUSG00000014767.18"/>
</dbReference>
<dbReference type="Ensembl" id="ENSMUST00000117593.8">
    <property type="protein sequence ID" value="ENSMUSP00000112794.2"/>
    <property type="gene ID" value="ENSMUSG00000014767.18"/>
</dbReference>
<dbReference type="Ensembl" id="ENSMUST00000162505.8">
    <property type="protein sequence ID" value="ENSMUSP00000124317.2"/>
    <property type="gene ID" value="ENSMUSG00000014767.18"/>
</dbReference>
<dbReference type="GeneID" id="21374"/>
<dbReference type="KEGG" id="mmu:21374"/>
<dbReference type="UCSC" id="uc008aon.2">
    <property type="organism name" value="mouse"/>
</dbReference>
<dbReference type="AGR" id="MGI:101838"/>
<dbReference type="CTD" id="6908"/>
<dbReference type="MGI" id="MGI:101838">
    <property type="gene designation" value="Tbp"/>
</dbReference>
<dbReference type="VEuPathDB" id="HostDB:ENSMUSG00000014767"/>
<dbReference type="eggNOG" id="KOG3302">
    <property type="taxonomic scope" value="Eukaryota"/>
</dbReference>
<dbReference type="GeneTree" id="ENSGT00940000157474"/>
<dbReference type="HOGENOM" id="CLU_060161_1_1_1"/>
<dbReference type="InParanoid" id="P29037"/>
<dbReference type="OMA" id="NMDQNNS"/>
<dbReference type="OrthoDB" id="2127950at2759"/>
<dbReference type="PhylomeDB" id="P29037"/>
<dbReference type="TreeFam" id="TF300102"/>
<dbReference type="Reactome" id="R-MMU-5250924">
    <property type="pathway name" value="B-WICH complex positively regulates rRNA expression"/>
</dbReference>
<dbReference type="Reactome" id="R-MMU-674695">
    <property type="pathway name" value="RNA Polymerase II Pre-transcription Events"/>
</dbReference>
<dbReference type="Reactome" id="R-MMU-6804756">
    <property type="pathway name" value="Regulation of TP53 Activity through Phosphorylation"/>
</dbReference>
<dbReference type="Reactome" id="R-MMU-6807505">
    <property type="pathway name" value="RNA polymerase II transcribes snRNA genes"/>
</dbReference>
<dbReference type="Reactome" id="R-MMU-73762">
    <property type="pathway name" value="RNA Polymerase I Transcription Initiation"/>
</dbReference>
<dbReference type="Reactome" id="R-MMU-73772">
    <property type="pathway name" value="RNA Polymerase I Promoter Escape"/>
</dbReference>
<dbReference type="Reactome" id="R-MMU-73776">
    <property type="pathway name" value="RNA Polymerase II Promoter Escape"/>
</dbReference>
<dbReference type="Reactome" id="R-MMU-73779">
    <property type="pathway name" value="RNA Polymerase II Transcription Pre-Initiation And Promoter Opening"/>
</dbReference>
<dbReference type="Reactome" id="R-MMU-73863">
    <property type="pathway name" value="RNA Polymerase I Transcription Termination"/>
</dbReference>
<dbReference type="Reactome" id="R-MMU-75953">
    <property type="pathway name" value="RNA Polymerase II Transcription Initiation"/>
</dbReference>
<dbReference type="Reactome" id="R-MMU-76042">
    <property type="pathway name" value="RNA Polymerase II Transcription Initiation And Promoter Clearance"/>
</dbReference>
<dbReference type="Reactome" id="R-MMU-76061">
    <property type="pathway name" value="RNA Polymerase III Transcription Initiation From Type 1 Promoter"/>
</dbReference>
<dbReference type="Reactome" id="R-MMU-76066">
    <property type="pathway name" value="RNA Polymerase III Transcription Initiation From Type 2 Promoter"/>
</dbReference>
<dbReference type="Reactome" id="R-MMU-76071">
    <property type="pathway name" value="RNA Polymerase III Transcription Initiation From Type 3 Promoter"/>
</dbReference>
<dbReference type="Reactome" id="R-MMU-9018519">
    <property type="pathway name" value="Estrogen-dependent gene expression"/>
</dbReference>
<dbReference type="BioGRID-ORCS" id="21374">
    <property type="hits" value="22 hits in 79 CRISPR screens"/>
</dbReference>
<dbReference type="ChiTaRS" id="Tbp">
    <property type="organism name" value="mouse"/>
</dbReference>
<dbReference type="PRO" id="PR:P29037"/>
<dbReference type="Proteomes" id="UP000000589">
    <property type="component" value="Chromosome 17"/>
</dbReference>
<dbReference type="RNAct" id="P29037">
    <property type="molecule type" value="protein"/>
</dbReference>
<dbReference type="Bgee" id="ENSMUSG00000014767">
    <property type="expression patterns" value="Expressed in embryonic post-anal tail and 243 other cell types or tissues"/>
</dbReference>
<dbReference type="ExpressionAtlas" id="P29037">
    <property type="expression patterns" value="baseline and differential"/>
</dbReference>
<dbReference type="GO" id="GO:0005737">
    <property type="term" value="C:cytoplasm"/>
    <property type="evidence" value="ECO:0000314"/>
    <property type="project" value="MGI"/>
</dbReference>
<dbReference type="GO" id="GO:0005829">
    <property type="term" value="C:cytosol"/>
    <property type="evidence" value="ECO:0007669"/>
    <property type="project" value="Ensembl"/>
</dbReference>
<dbReference type="GO" id="GO:0000791">
    <property type="term" value="C:euchromatin"/>
    <property type="evidence" value="ECO:0007669"/>
    <property type="project" value="Ensembl"/>
</dbReference>
<dbReference type="GO" id="GO:0001674">
    <property type="term" value="C:female germ cell nucleus"/>
    <property type="evidence" value="ECO:0000314"/>
    <property type="project" value="MGI"/>
</dbReference>
<dbReference type="GO" id="GO:0001939">
    <property type="term" value="C:female pronucleus"/>
    <property type="evidence" value="ECO:0000314"/>
    <property type="project" value="MGI"/>
</dbReference>
<dbReference type="GO" id="GO:0001673">
    <property type="term" value="C:male germ cell nucleus"/>
    <property type="evidence" value="ECO:0000314"/>
    <property type="project" value="MGI"/>
</dbReference>
<dbReference type="GO" id="GO:0001940">
    <property type="term" value="C:male pronucleus"/>
    <property type="evidence" value="ECO:0000314"/>
    <property type="project" value="MGI"/>
</dbReference>
<dbReference type="GO" id="GO:0005654">
    <property type="term" value="C:nucleoplasm"/>
    <property type="evidence" value="ECO:0000304"/>
    <property type="project" value="Reactome"/>
</dbReference>
<dbReference type="GO" id="GO:0005634">
    <property type="term" value="C:nucleus"/>
    <property type="evidence" value="ECO:0000314"/>
    <property type="project" value="MGI"/>
</dbReference>
<dbReference type="GO" id="GO:0045120">
    <property type="term" value="C:pronucleus"/>
    <property type="evidence" value="ECO:0000314"/>
    <property type="project" value="MGI"/>
</dbReference>
<dbReference type="GO" id="GO:0000120">
    <property type="term" value="C:RNA polymerase I transcription regulator complex"/>
    <property type="evidence" value="ECO:0000304"/>
    <property type="project" value="MGI"/>
</dbReference>
<dbReference type="GO" id="GO:0005668">
    <property type="term" value="C:RNA polymerase transcription factor SL1 complex"/>
    <property type="evidence" value="ECO:0000353"/>
    <property type="project" value="MGI"/>
</dbReference>
<dbReference type="GO" id="GO:0005672">
    <property type="term" value="C:transcription factor TFIIA complex"/>
    <property type="evidence" value="ECO:0007669"/>
    <property type="project" value="Ensembl"/>
</dbReference>
<dbReference type="GO" id="GO:0005669">
    <property type="term" value="C:transcription factor TFIID complex"/>
    <property type="evidence" value="ECO:0000314"/>
    <property type="project" value="MGI"/>
</dbReference>
<dbReference type="GO" id="GO:0017162">
    <property type="term" value="F:aryl hydrocarbon receptor binding"/>
    <property type="evidence" value="ECO:0007669"/>
    <property type="project" value="Ensembl"/>
</dbReference>
<dbReference type="GO" id="GO:0003677">
    <property type="term" value="F:DNA binding"/>
    <property type="evidence" value="ECO:0000314"/>
    <property type="project" value="MGI"/>
</dbReference>
<dbReference type="GO" id="GO:0019899">
    <property type="term" value="F:enzyme binding"/>
    <property type="evidence" value="ECO:0007669"/>
    <property type="project" value="Ensembl"/>
</dbReference>
<dbReference type="GO" id="GO:0001164">
    <property type="term" value="F:RNA polymerase I core promoter sequence-specific DNA binding"/>
    <property type="evidence" value="ECO:0000250"/>
    <property type="project" value="UniProtKB"/>
</dbReference>
<dbReference type="GO" id="GO:0000978">
    <property type="term" value="F:RNA polymerase II cis-regulatory region sequence-specific DNA binding"/>
    <property type="evidence" value="ECO:0000314"/>
    <property type="project" value="MGI"/>
</dbReference>
<dbReference type="GO" id="GO:0000979">
    <property type="term" value="F:RNA polymerase II core promoter sequence-specific DNA binding"/>
    <property type="evidence" value="ECO:0007669"/>
    <property type="project" value="Ensembl"/>
</dbReference>
<dbReference type="GO" id="GO:0016251">
    <property type="term" value="F:RNA polymerase II general transcription initiation factor activity"/>
    <property type="evidence" value="ECO:0007669"/>
    <property type="project" value="Ensembl"/>
</dbReference>
<dbReference type="GO" id="GO:0061629">
    <property type="term" value="F:RNA polymerase II-specific DNA-binding transcription factor binding"/>
    <property type="evidence" value="ECO:0000353"/>
    <property type="project" value="MGI"/>
</dbReference>
<dbReference type="GO" id="GO:0000995">
    <property type="term" value="F:RNA polymerase III general transcription initiation factor activity"/>
    <property type="evidence" value="ECO:0000250"/>
    <property type="project" value="UniProtKB"/>
</dbReference>
<dbReference type="GO" id="GO:0001093">
    <property type="term" value="F:TFIIB-class transcription factor binding"/>
    <property type="evidence" value="ECO:0007669"/>
    <property type="project" value="Ensembl"/>
</dbReference>
<dbReference type="GO" id="GO:0000976">
    <property type="term" value="F:transcription cis-regulatory region binding"/>
    <property type="evidence" value="ECO:0000266"/>
    <property type="project" value="MGI"/>
</dbReference>
<dbReference type="GO" id="GO:0042789">
    <property type="term" value="P:mRNA transcription by RNA polymerase II"/>
    <property type="evidence" value="ECO:0000266"/>
    <property type="project" value="ComplexPortal"/>
</dbReference>
<dbReference type="GO" id="GO:0060261">
    <property type="term" value="P:positive regulation of transcription initiation by RNA polymerase II"/>
    <property type="evidence" value="ECO:0000266"/>
    <property type="project" value="ComplexPortal"/>
</dbReference>
<dbReference type="GO" id="GO:0051123">
    <property type="term" value="P:RNA polymerase II preinitiation complex assembly"/>
    <property type="evidence" value="ECO:0000266"/>
    <property type="project" value="ComplexPortal"/>
</dbReference>
<dbReference type="GO" id="GO:0006366">
    <property type="term" value="P:transcription by RNA polymerase II"/>
    <property type="evidence" value="ECO:0000315"/>
    <property type="project" value="MGI"/>
</dbReference>
<dbReference type="GO" id="GO:0006383">
    <property type="term" value="P:transcription by RNA polymerase III"/>
    <property type="evidence" value="ECO:0000315"/>
    <property type="project" value="MGI"/>
</dbReference>
<dbReference type="CDD" id="cd04516">
    <property type="entry name" value="TBP_eukaryotes"/>
    <property type="match status" value="1"/>
</dbReference>
<dbReference type="FunFam" id="3.30.310.10:FF:000001">
    <property type="entry name" value="TATA-box-binding protein 2"/>
    <property type="match status" value="1"/>
</dbReference>
<dbReference type="FunFam" id="3.30.310.10:FF:000002">
    <property type="entry name" value="TATA-box-binding protein 2"/>
    <property type="match status" value="1"/>
</dbReference>
<dbReference type="Gene3D" id="3.30.310.10">
    <property type="entry name" value="TATA-Binding Protein"/>
    <property type="match status" value="2"/>
</dbReference>
<dbReference type="HAMAP" id="MF_00408">
    <property type="entry name" value="TATA_bind_prot_arch"/>
    <property type="match status" value="1"/>
</dbReference>
<dbReference type="InterPro" id="IPR000814">
    <property type="entry name" value="TBP"/>
</dbReference>
<dbReference type="InterPro" id="IPR030491">
    <property type="entry name" value="TBP_CS"/>
</dbReference>
<dbReference type="InterPro" id="IPR012295">
    <property type="entry name" value="TBP_dom_sf"/>
</dbReference>
<dbReference type="InterPro" id="IPR033710">
    <property type="entry name" value="TBP_eukaryotic"/>
</dbReference>
<dbReference type="PANTHER" id="PTHR10126">
    <property type="entry name" value="TATA-BOX BINDING PROTEIN"/>
    <property type="match status" value="1"/>
</dbReference>
<dbReference type="Pfam" id="PF00352">
    <property type="entry name" value="TBP"/>
    <property type="match status" value="2"/>
</dbReference>
<dbReference type="PRINTS" id="PR00686">
    <property type="entry name" value="TIFACTORIID"/>
</dbReference>
<dbReference type="SUPFAM" id="SSF55945">
    <property type="entry name" value="TATA-box binding protein-like"/>
    <property type="match status" value="2"/>
</dbReference>
<dbReference type="PROSITE" id="PS00351">
    <property type="entry name" value="TFIID"/>
    <property type="match status" value="2"/>
</dbReference>
<organism>
    <name type="scientific">Mus musculus</name>
    <name type="common">Mouse</name>
    <dbReference type="NCBI Taxonomy" id="10090"/>
    <lineage>
        <taxon>Eukaryota</taxon>
        <taxon>Metazoa</taxon>
        <taxon>Chordata</taxon>
        <taxon>Craniata</taxon>
        <taxon>Vertebrata</taxon>
        <taxon>Euteleostomi</taxon>
        <taxon>Mammalia</taxon>
        <taxon>Eutheria</taxon>
        <taxon>Euarchontoglires</taxon>
        <taxon>Glires</taxon>
        <taxon>Rodentia</taxon>
        <taxon>Myomorpha</taxon>
        <taxon>Muroidea</taxon>
        <taxon>Muridae</taxon>
        <taxon>Murinae</taxon>
        <taxon>Mus</taxon>
        <taxon>Mus</taxon>
    </lineage>
</organism>
<keyword id="KW-0238">DNA-binding</keyword>
<keyword id="KW-0539">Nucleus</keyword>
<keyword id="KW-1185">Reference proteome</keyword>
<keyword id="KW-0677">Repeat</keyword>
<keyword id="KW-0804">Transcription</keyword>
<keyword id="KW-0805">Transcription regulation</keyword>
<gene>
    <name type="primary">Tbp</name>
    <name type="synonym">Tfiid</name>
</gene>
<proteinExistence type="evidence at protein level"/>
<feature type="chain" id="PRO_0000153958" description="TATA-box-binding protein">
    <location>
        <begin position="1"/>
        <end position="316"/>
    </location>
</feature>
<feature type="repeat" description="1">
    <location>
        <begin position="142"/>
        <end position="218"/>
    </location>
</feature>
<feature type="repeat" description="2">
    <location>
        <begin position="232"/>
        <end position="309"/>
    </location>
</feature>
<feature type="region of interest" description="Disordered" evidence="2">
    <location>
        <begin position="1"/>
        <end position="21"/>
    </location>
</feature>
<feature type="region of interest" description="Disordered" evidence="2">
    <location>
        <begin position="104"/>
        <end position="135"/>
    </location>
</feature>
<feature type="compositionally biased region" description="Low complexity" evidence="2">
    <location>
        <begin position="104"/>
        <end position="115"/>
    </location>
</feature>
<feature type="compositionally biased region" description="Low complexity" evidence="2">
    <location>
        <begin position="123"/>
        <end position="133"/>
    </location>
</feature>
<feature type="binding site" evidence="1">
    <location>
        <position position="144"/>
    </location>
    <ligand>
        <name>DNA</name>
        <dbReference type="ChEBI" id="CHEBI:16991"/>
    </ligand>
</feature>
<feature type="binding site" evidence="1">
    <location>
        <position position="180"/>
    </location>
    <ligand>
        <name>DNA</name>
        <dbReference type="ChEBI" id="CHEBI:16991"/>
    </ligand>
</feature>
<feature type="binding site" evidence="1">
    <location>
        <position position="195"/>
    </location>
    <ligand>
        <name>DNA</name>
        <dbReference type="ChEBI" id="CHEBI:16991"/>
    </ligand>
</feature>
<feature type="binding site" evidence="1">
    <location>
        <position position="234"/>
    </location>
    <ligand>
        <name>DNA</name>
        <dbReference type="ChEBI" id="CHEBI:16991"/>
    </ligand>
</feature>
<feature type="binding site" evidence="1">
    <location>
        <position position="271"/>
    </location>
    <ligand>
        <name>DNA</name>
        <dbReference type="ChEBI" id="CHEBI:16991"/>
    </ligand>
</feature>
<feature type="sequence variant" description="In strain: TW18/TW5.">
    <original>Q</original>
    <variation>QQQ</variation>
    <location>
        <position position="70"/>
    </location>
</feature>
<feature type="sequence conflict" description="In Ref. 6; AAH50136." evidence="10" ref="6">
    <original>Q</original>
    <variation>R</variation>
    <location>
        <position position="141"/>
    </location>
</feature>
<feature type="sequence conflict" description="In Ref. 4; BAC39346." evidence="10" ref="4">
    <original>A</original>
    <variation>P</variation>
    <location>
        <position position="164"/>
    </location>
</feature>
<evidence type="ECO:0000250" key="1">
    <source>
        <dbReference type="UniProtKB" id="P20226"/>
    </source>
</evidence>
<evidence type="ECO:0000256" key="2">
    <source>
        <dbReference type="SAM" id="MobiDB-lite"/>
    </source>
</evidence>
<evidence type="ECO:0000269" key="3">
    <source>
    </source>
</evidence>
<evidence type="ECO:0000269" key="4">
    <source>
    </source>
</evidence>
<evidence type="ECO:0000269" key="5">
    <source>
    </source>
</evidence>
<evidence type="ECO:0000269" key="6">
    <source>
    </source>
</evidence>
<evidence type="ECO:0000269" key="7">
    <source>
    </source>
</evidence>
<evidence type="ECO:0000269" key="8">
    <source>
    </source>
</evidence>
<evidence type="ECO:0000269" key="9">
    <source>
    </source>
</evidence>
<evidence type="ECO:0000305" key="10"/>
<name>TBP_MOUSE</name>